<accession>Q1JA75</accession>
<reference key="1">
    <citation type="journal article" date="2006" name="Proc. Natl. Acad. Sci. U.S.A.">
        <title>Molecular genetic anatomy of inter- and intraserotype variation in the human bacterial pathogen group A Streptococcus.</title>
        <authorList>
            <person name="Beres S.B."/>
            <person name="Richter E.W."/>
            <person name="Nagiec M.J."/>
            <person name="Sumby P."/>
            <person name="Porcella S.F."/>
            <person name="DeLeo F.R."/>
            <person name="Musser J.M."/>
        </authorList>
    </citation>
    <scope>NUCLEOTIDE SEQUENCE [LARGE SCALE GENOMIC DNA]</scope>
    <source>
        <strain>MGAS2096</strain>
    </source>
</reference>
<feature type="chain" id="PRO_1000016044" description="Aspartyl/glutamyl-tRNA(Asn/Gln) amidotransferase subunit B">
    <location>
        <begin position="1"/>
        <end position="479"/>
    </location>
</feature>
<evidence type="ECO:0000255" key="1">
    <source>
        <dbReference type="HAMAP-Rule" id="MF_00121"/>
    </source>
</evidence>
<protein>
    <recommendedName>
        <fullName evidence="1">Aspartyl/glutamyl-tRNA(Asn/Gln) amidotransferase subunit B</fullName>
        <shortName evidence="1">Asp/Glu-ADT subunit B</shortName>
        <ecNumber evidence="1">6.3.5.-</ecNumber>
    </recommendedName>
</protein>
<organism>
    <name type="scientific">Streptococcus pyogenes serotype M12 (strain MGAS2096)</name>
    <dbReference type="NCBI Taxonomy" id="370553"/>
    <lineage>
        <taxon>Bacteria</taxon>
        <taxon>Bacillati</taxon>
        <taxon>Bacillota</taxon>
        <taxon>Bacilli</taxon>
        <taxon>Lactobacillales</taxon>
        <taxon>Streptococcaceae</taxon>
        <taxon>Streptococcus</taxon>
    </lineage>
</organism>
<comment type="function">
    <text evidence="1">Allows the formation of correctly charged Asn-tRNA(Asn) or Gln-tRNA(Gln) through the transamidation of misacylated Asp-tRNA(Asn) or Glu-tRNA(Gln) in organisms which lack either or both of asparaginyl-tRNA or glutaminyl-tRNA synthetases. The reaction takes place in the presence of glutamine and ATP through an activated phospho-Asp-tRNA(Asn) or phospho-Glu-tRNA(Gln).</text>
</comment>
<comment type="catalytic activity">
    <reaction evidence="1">
        <text>L-glutamyl-tRNA(Gln) + L-glutamine + ATP + H2O = L-glutaminyl-tRNA(Gln) + L-glutamate + ADP + phosphate + H(+)</text>
        <dbReference type="Rhea" id="RHEA:17521"/>
        <dbReference type="Rhea" id="RHEA-COMP:9681"/>
        <dbReference type="Rhea" id="RHEA-COMP:9684"/>
        <dbReference type="ChEBI" id="CHEBI:15377"/>
        <dbReference type="ChEBI" id="CHEBI:15378"/>
        <dbReference type="ChEBI" id="CHEBI:29985"/>
        <dbReference type="ChEBI" id="CHEBI:30616"/>
        <dbReference type="ChEBI" id="CHEBI:43474"/>
        <dbReference type="ChEBI" id="CHEBI:58359"/>
        <dbReference type="ChEBI" id="CHEBI:78520"/>
        <dbReference type="ChEBI" id="CHEBI:78521"/>
        <dbReference type="ChEBI" id="CHEBI:456216"/>
    </reaction>
</comment>
<comment type="catalytic activity">
    <reaction evidence="1">
        <text>L-aspartyl-tRNA(Asn) + L-glutamine + ATP + H2O = L-asparaginyl-tRNA(Asn) + L-glutamate + ADP + phosphate + 2 H(+)</text>
        <dbReference type="Rhea" id="RHEA:14513"/>
        <dbReference type="Rhea" id="RHEA-COMP:9674"/>
        <dbReference type="Rhea" id="RHEA-COMP:9677"/>
        <dbReference type="ChEBI" id="CHEBI:15377"/>
        <dbReference type="ChEBI" id="CHEBI:15378"/>
        <dbReference type="ChEBI" id="CHEBI:29985"/>
        <dbReference type="ChEBI" id="CHEBI:30616"/>
        <dbReference type="ChEBI" id="CHEBI:43474"/>
        <dbReference type="ChEBI" id="CHEBI:58359"/>
        <dbReference type="ChEBI" id="CHEBI:78515"/>
        <dbReference type="ChEBI" id="CHEBI:78516"/>
        <dbReference type="ChEBI" id="CHEBI:456216"/>
    </reaction>
</comment>
<comment type="subunit">
    <text evidence="1">Heterotrimer of A, B and C subunits.</text>
</comment>
<comment type="similarity">
    <text evidence="1">Belongs to the GatB/GatE family. GatB subfamily.</text>
</comment>
<proteinExistence type="inferred from homology"/>
<keyword id="KW-0067">ATP-binding</keyword>
<keyword id="KW-0436">Ligase</keyword>
<keyword id="KW-0547">Nucleotide-binding</keyword>
<keyword id="KW-0648">Protein biosynthesis</keyword>
<dbReference type="EC" id="6.3.5.-" evidence="1"/>
<dbReference type="EMBL" id="CP000261">
    <property type="protein sequence ID" value="ABF36586.1"/>
    <property type="molecule type" value="Genomic_DNA"/>
</dbReference>
<dbReference type="SMR" id="Q1JA75"/>
<dbReference type="KEGG" id="spj:MGAS2096_Spy1534"/>
<dbReference type="HOGENOM" id="CLU_019240_0_0_9"/>
<dbReference type="GO" id="GO:0050566">
    <property type="term" value="F:asparaginyl-tRNA synthase (glutamine-hydrolyzing) activity"/>
    <property type="evidence" value="ECO:0007669"/>
    <property type="project" value="RHEA"/>
</dbReference>
<dbReference type="GO" id="GO:0005524">
    <property type="term" value="F:ATP binding"/>
    <property type="evidence" value="ECO:0007669"/>
    <property type="project" value="UniProtKB-KW"/>
</dbReference>
<dbReference type="GO" id="GO:0050567">
    <property type="term" value="F:glutaminyl-tRNA synthase (glutamine-hydrolyzing) activity"/>
    <property type="evidence" value="ECO:0007669"/>
    <property type="project" value="UniProtKB-UniRule"/>
</dbReference>
<dbReference type="GO" id="GO:0070681">
    <property type="term" value="P:glutaminyl-tRNAGln biosynthesis via transamidation"/>
    <property type="evidence" value="ECO:0007669"/>
    <property type="project" value="TreeGrafter"/>
</dbReference>
<dbReference type="GO" id="GO:0006412">
    <property type="term" value="P:translation"/>
    <property type="evidence" value="ECO:0007669"/>
    <property type="project" value="UniProtKB-UniRule"/>
</dbReference>
<dbReference type="FunFam" id="1.10.10.410:FF:000001">
    <property type="entry name" value="Aspartyl/glutamyl-tRNA(Asn/Gln) amidotransferase subunit B"/>
    <property type="match status" value="1"/>
</dbReference>
<dbReference type="FunFam" id="1.10.150.380:FF:000001">
    <property type="entry name" value="Aspartyl/glutamyl-tRNA(Asn/Gln) amidotransferase subunit B"/>
    <property type="match status" value="1"/>
</dbReference>
<dbReference type="Gene3D" id="1.10.10.410">
    <property type="match status" value="1"/>
</dbReference>
<dbReference type="Gene3D" id="1.10.150.380">
    <property type="entry name" value="GatB domain, N-terminal subdomain"/>
    <property type="match status" value="1"/>
</dbReference>
<dbReference type="HAMAP" id="MF_00121">
    <property type="entry name" value="GatB"/>
    <property type="match status" value="1"/>
</dbReference>
<dbReference type="InterPro" id="IPR017959">
    <property type="entry name" value="Asn/Gln-tRNA_amidoTrfase_suB/E"/>
</dbReference>
<dbReference type="InterPro" id="IPR006075">
    <property type="entry name" value="Asn/Gln-tRNA_Trfase_suB/E_cat"/>
</dbReference>
<dbReference type="InterPro" id="IPR018027">
    <property type="entry name" value="Asn/Gln_amidotransferase"/>
</dbReference>
<dbReference type="InterPro" id="IPR003789">
    <property type="entry name" value="Asn/Gln_tRNA_amidoTrase-B-like"/>
</dbReference>
<dbReference type="InterPro" id="IPR004413">
    <property type="entry name" value="GatB"/>
</dbReference>
<dbReference type="InterPro" id="IPR042114">
    <property type="entry name" value="GatB_C_1"/>
</dbReference>
<dbReference type="InterPro" id="IPR023168">
    <property type="entry name" value="GatB_Yqey_C_2"/>
</dbReference>
<dbReference type="InterPro" id="IPR017958">
    <property type="entry name" value="Gln-tRNA_amidoTrfase_suB_CS"/>
</dbReference>
<dbReference type="InterPro" id="IPR014746">
    <property type="entry name" value="Gln_synth/guanido_kin_cat_dom"/>
</dbReference>
<dbReference type="NCBIfam" id="TIGR00133">
    <property type="entry name" value="gatB"/>
    <property type="match status" value="1"/>
</dbReference>
<dbReference type="NCBIfam" id="NF004011">
    <property type="entry name" value="PRK05477.1-1"/>
    <property type="match status" value="1"/>
</dbReference>
<dbReference type="NCBIfam" id="NF004012">
    <property type="entry name" value="PRK05477.1-2"/>
    <property type="match status" value="1"/>
</dbReference>
<dbReference type="NCBIfam" id="NF004014">
    <property type="entry name" value="PRK05477.1-4"/>
    <property type="match status" value="1"/>
</dbReference>
<dbReference type="PANTHER" id="PTHR11659">
    <property type="entry name" value="GLUTAMYL-TRNA GLN AMIDOTRANSFERASE SUBUNIT B MITOCHONDRIAL AND PROKARYOTIC PET112-RELATED"/>
    <property type="match status" value="1"/>
</dbReference>
<dbReference type="PANTHER" id="PTHR11659:SF0">
    <property type="entry name" value="GLUTAMYL-TRNA(GLN) AMIDOTRANSFERASE SUBUNIT B, MITOCHONDRIAL"/>
    <property type="match status" value="1"/>
</dbReference>
<dbReference type="Pfam" id="PF02934">
    <property type="entry name" value="GatB_N"/>
    <property type="match status" value="1"/>
</dbReference>
<dbReference type="Pfam" id="PF02637">
    <property type="entry name" value="GatB_Yqey"/>
    <property type="match status" value="1"/>
</dbReference>
<dbReference type="SMART" id="SM00845">
    <property type="entry name" value="GatB_Yqey"/>
    <property type="match status" value="1"/>
</dbReference>
<dbReference type="SUPFAM" id="SSF89095">
    <property type="entry name" value="GatB/YqeY motif"/>
    <property type="match status" value="1"/>
</dbReference>
<dbReference type="SUPFAM" id="SSF55931">
    <property type="entry name" value="Glutamine synthetase/guanido kinase"/>
    <property type="match status" value="1"/>
</dbReference>
<dbReference type="PROSITE" id="PS01234">
    <property type="entry name" value="GATB"/>
    <property type="match status" value="1"/>
</dbReference>
<name>GATB_STRPB</name>
<sequence length="479" mass="53458">MNFETIIGLEVHVELNTNSKIFSPSSAHFGEDPNANTNVIDWSFPGVLPVMNKGVIDAGIKAALALNMDIHKEMHFDRKNYFYPDNPKAYQISQFDEPIGYNGWIKIKLEDGSTKKIRIERAHLEEDAGKNTHGTDGYSYVDLNRQGVPLIEIVSEADMRSPEEAYAYLTALKEIIQYTGISDVKMEEGSMRVDANISLRPYGQEQFGTKTELKNLNSFSNVRKGLEFEVERQAKLLRSGGVIRQETRRYDEANKGTILMRVKEGAADYRYFPEPDLPLYEIDDAWIDEMRAQLPQFPAQRRAKYEEELGLSAYDASQLTATKVLSDYFETAVSLGGDAKQVSNWLQGEVAQFLNAEGKTIEEIALTPENLVEMIAIIADGTISSKMAKKVFVHLAKNGGSARAYVEKAGLVQISDPAVLVPIIHQVFADNEAAVADFKSGKRNADKAFTGFLMKATKGQANPQVAQQLLAQELQKLRD</sequence>
<gene>
    <name evidence="1" type="primary">gatB</name>
    <name type="ordered locus">MGAS2096_Spy1534</name>
</gene>